<feature type="chain" id="PRO_0000178635" description="Methylglyoxal synthase">
    <location>
        <begin position="1"/>
        <end position="134"/>
    </location>
</feature>
<feature type="domain" description="MGS-like" evidence="1">
    <location>
        <begin position="1"/>
        <end position="134"/>
    </location>
</feature>
<feature type="active site" description="Proton donor/acceptor" evidence="1">
    <location>
        <position position="60"/>
    </location>
</feature>
<feature type="binding site" evidence="1">
    <location>
        <position position="8"/>
    </location>
    <ligand>
        <name>substrate</name>
    </ligand>
</feature>
<feature type="binding site" evidence="1">
    <location>
        <position position="12"/>
    </location>
    <ligand>
        <name>substrate</name>
    </ligand>
</feature>
<feature type="binding site" evidence="1">
    <location>
        <begin position="34"/>
        <end position="37"/>
    </location>
    <ligand>
        <name>substrate</name>
    </ligand>
</feature>
<feature type="binding site" evidence="1">
    <location>
        <begin position="54"/>
        <end position="55"/>
    </location>
    <ligand>
        <name>substrate</name>
    </ligand>
</feature>
<feature type="binding site" evidence="1">
    <location>
        <position position="87"/>
    </location>
    <ligand>
        <name>substrate</name>
    </ligand>
</feature>
<accession>Q71YA9</accession>
<reference key="1">
    <citation type="journal article" date="2004" name="Nucleic Acids Res.">
        <title>Whole genome comparisons of serotype 4b and 1/2a strains of the food-borne pathogen Listeria monocytogenes reveal new insights into the core genome components of this species.</title>
        <authorList>
            <person name="Nelson K.E."/>
            <person name="Fouts D.E."/>
            <person name="Mongodin E.F."/>
            <person name="Ravel J."/>
            <person name="DeBoy R.T."/>
            <person name="Kolonay J.F."/>
            <person name="Rasko D.A."/>
            <person name="Angiuoli S.V."/>
            <person name="Gill S.R."/>
            <person name="Paulsen I.T."/>
            <person name="Peterson J.D."/>
            <person name="White O."/>
            <person name="Nelson W.C."/>
            <person name="Nierman W.C."/>
            <person name="Beanan M.J."/>
            <person name="Brinkac L.M."/>
            <person name="Daugherty S.C."/>
            <person name="Dodson R.J."/>
            <person name="Durkin A.S."/>
            <person name="Madupu R."/>
            <person name="Haft D.H."/>
            <person name="Selengut J."/>
            <person name="Van Aken S.E."/>
            <person name="Khouri H.M."/>
            <person name="Fedorova N."/>
            <person name="Forberger H.A."/>
            <person name="Tran B."/>
            <person name="Kathariou S."/>
            <person name="Wonderling L.D."/>
            <person name="Uhlich G.A."/>
            <person name="Bayles D.O."/>
            <person name="Luchansky J.B."/>
            <person name="Fraser C.M."/>
        </authorList>
    </citation>
    <scope>NUCLEOTIDE SEQUENCE [LARGE SCALE GENOMIC DNA]</scope>
    <source>
        <strain>F2365</strain>
    </source>
</reference>
<comment type="function">
    <text evidence="1">Catalyzes the formation of methylglyoxal from dihydroxyacetone phosphate.</text>
</comment>
<comment type="catalytic activity">
    <reaction evidence="1">
        <text>dihydroxyacetone phosphate = methylglyoxal + phosphate</text>
        <dbReference type="Rhea" id="RHEA:17937"/>
        <dbReference type="ChEBI" id="CHEBI:17158"/>
        <dbReference type="ChEBI" id="CHEBI:43474"/>
        <dbReference type="ChEBI" id="CHEBI:57642"/>
        <dbReference type="EC" id="4.2.3.3"/>
    </reaction>
</comment>
<comment type="similarity">
    <text evidence="1">Belongs to the methylglyoxal synthase family.</text>
</comment>
<gene>
    <name evidence="1" type="primary">mgsA</name>
    <name type="ordered locus">LMOf2365_1935</name>
</gene>
<keyword id="KW-0456">Lyase</keyword>
<name>MGSA_LISMF</name>
<dbReference type="EC" id="4.2.3.3" evidence="1"/>
<dbReference type="EMBL" id="AE017262">
    <property type="protein sequence ID" value="AAT04705.1"/>
    <property type="molecule type" value="Genomic_DNA"/>
</dbReference>
<dbReference type="RefSeq" id="WP_003723016.1">
    <property type="nucleotide sequence ID" value="NC_002973.6"/>
</dbReference>
<dbReference type="SMR" id="Q71YA9"/>
<dbReference type="GeneID" id="93239820"/>
<dbReference type="KEGG" id="lmf:LMOf2365_1935"/>
<dbReference type="HOGENOM" id="CLU_120420_1_0_9"/>
<dbReference type="GO" id="GO:0005829">
    <property type="term" value="C:cytosol"/>
    <property type="evidence" value="ECO:0007669"/>
    <property type="project" value="TreeGrafter"/>
</dbReference>
<dbReference type="GO" id="GO:0008929">
    <property type="term" value="F:methylglyoxal synthase activity"/>
    <property type="evidence" value="ECO:0007669"/>
    <property type="project" value="UniProtKB-UniRule"/>
</dbReference>
<dbReference type="GO" id="GO:0019242">
    <property type="term" value="P:methylglyoxal biosynthetic process"/>
    <property type="evidence" value="ECO:0007669"/>
    <property type="project" value="UniProtKB-UniRule"/>
</dbReference>
<dbReference type="CDD" id="cd01422">
    <property type="entry name" value="MGS"/>
    <property type="match status" value="1"/>
</dbReference>
<dbReference type="FunFam" id="3.40.50.1380:FF:000006">
    <property type="entry name" value="Methylglyoxal synthase"/>
    <property type="match status" value="1"/>
</dbReference>
<dbReference type="Gene3D" id="3.40.50.1380">
    <property type="entry name" value="Methylglyoxal synthase-like domain"/>
    <property type="match status" value="1"/>
</dbReference>
<dbReference type="HAMAP" id="MF_00549">
    <property type="entry name" value="Methylglyoxal_synth"/>
    <property type="match status" value="1"/>
</dbReference>
<dbReference type="InterPro" id="IPR004363">
    <property type="entry name" value="Methylgl_synth"/>
</dbReference>
<dbReference type="InterPro" id="IPR018148">
    <property type="entry name" value="Methylglyoxal_synth_AS"/>
</dbReference>
<dbReference type="InterPro" id="IPR011607">
    <property type="entry name" value="MGS-like_dom"/>
</dbReference>
<dbReference type="InterPro" id="IPR036914">
    <property type="entry name" value="MGS-like_dom_sf"/>
</dbReference>
<dbReference type="NCBIfam" id="TIGR00160">
    <property type="entry name" value="MGSA"/>
    <property type="match status" value="1"/>
</dbReference>
<dbReference type="NCBIfam" id="NF003559">
    <property type="entry name" value="PRK05234.1"/>
    <property type="match status" value="1"/>
</dbReference>
<dbReference type="PANTHER" id="PTHR30492">
    <property type="entry name" value="METHYLGLYOXAL SYNTHASE"/>
    <property type="match status" value="1"/>
</dbReference>
<dbReference type="PANTHER" id="PTHR30492:SF0">
    <property type="entry name" value="METHYLGLYOXAL SYNTHASE"/>
    <property type="match status" value="1"/>
</dbReference>
<dbReference type="Pfam" id="PF02142">
    <property type="entry name" value="MGS"/>
    <property type="match status" value="1"/>
</dbReference>
<dbReference type="PIRSF" id="PIRSF006614">
    <property type="entry name" value="Methylglyox_syn"/>
    <property type="match status" value="1"/>
</dbReference>
<dbReference type="SMART" id="SM00851">
    <property type="entry name" value="MGS"/>
    <property type="match status" value="1"/>
</dbReference>
<dbReference type="SUPFAM" id="SSF52335">
    <property type="entry name" value="Methylglyoxal synthase-like"/>
    <property type="match status" value="1"/>
</dbReference>
<dbReference type="PROSITE" id="PS01335">
    <property type="entry name" value="METHYLGLYOXAL_SYNTH"/>
    <property type="match status" value="1"/>
</dbReference>
<dbReference type="PROSITE" id="PS51855">
    <property type="entry name" value="MGS"/>
    <property type="match status" value="1"/>
</dbReference>
<sequence length="134" mass="14883">MHIALIAHDEKKDLMVGFATAYKHLLEPHQLYATGTTGLRIIEATGLTVHRFKSGPLGGDQQIGARISENKMDLVIFLRDPLTAQPHEPDVTALIRLCDVYEIPLATNIGTAEILIRGLGAGFLDWRDLRRNDE</sequence>
<protein>
    <recommendedName>
        <fullName evidence="1">Methylglyoxal synthase</fullName>
        <shortName evidence="1">MGS</shortName>
        <ecNumber evidence="1">4.2.3.3</ecNumber>
    </recommendedName>
</protein>
<organism>
    <name type="scientific">Listeria monocytogenes serotype 4b (strain F2365)</name>
    <dbReference type="NCBI Taxonomy" id="265669"/>
    <lineage>
        <taxon>Bacteria</taxon>
        <taxon>Bacillati</taxon>
        <taxon>Bacillota</taxon>
        <taxon>Bacilli</taxon>
        <taxon>Bacillales</taxon>
        <taxon>Listeriaceae</taxon>
        <taxon>Listeria</taxon>
    </lineage>
</organism>
<evidence type="ECO:0000255" key="1">
    <source>
        <dbReference type="HAMAP-Rule" id="MF_00549"/>
    </source>
</evidence>
<proteinExistence type="inferred from homology"/>